<keyword id="KW-0030">Aminoacyl-tRNA synthetase</keyword>
<keyword id="KW-0067">ATP-binding</keyword>
<keyword id="KW-0963">Cytoplasm</keyword>
<keyword id="KW-0436">Ligase</keyword>
<keyword id="KW-0547">Nucleotide-binding</keyword>
<keyword id="KW-0648">Protein biosynthesis</keyword>
<reference key="1">
    <citation type="journal article" date="2010" name="Genome Biol.">
        <title>Structure and dynamics of the pan-genome of Streptococcus pneumoniae and closely related species.</title>
        <authorList>
            <person name="Donati C."/>
            <person name="Hiller N.L."/>
            <person name="Tettelin H."/>
            <person name="Muzzi A."/>
            <person name="Croucher N.J."/>
            <person name="Angiuoli S.V."/>
            <person name="Oggioni M."/>
            <person name="Dunning Hotopp J.C."/>
            <person name="Hu F.Z."/>
            <person name="Riley D.R."/>
            <person name="Covacci A."/>
            <person name="Mitchell T.J."/>
            <person name="Bentley S.D."/>
            <person name="Kilian M."/>
            <person name="Ehrlich G.D."/>
            <person name="Rappuoli R."/>
            <person name="Moxon E.R."/>
            <person name="Masignani V."/>
        </authorList>
    </citation>
    <scope>NUCLEOTIDE SEQUENCE [LARGE SCALE GENOMIC DNA]</scope>
    <source>
        <strain>Hungary19A-6</strain>
    </source>
</reference>
<dbReference type="EC" id="6.1.1.17" evidence="1"/>
<dbReference type="EMBL" id="CP000936">
    <property type="protein sequence ID" value="ACA36518.1"/>
    <property type="molecule type" value="Genomic_DNA"/>
</dbReference>
<dbReference type="RefSeq" id="WP_000031095.1">
    <property type="nucleotide sequence ID" value="NC_010380.1"/>
</dbReference>
<dbReference type="SMR" id="B1I9D7"/>
<dbReference type="KEGG" id="spv:SPH_2256"/>
<dbReference type="HOGENOM" id="CLU_015768_6_1_9"/>
<dbReference type="Proteomes" id="UP000002163">
    <property type="component" value="Chromosome"/>
</dbReference>
<dbReference type="GO" id="GO:0005829">
    <property type="term" value="C:cytosol"/>
    <property type="evidence" value="ECO:0007669"/>
    <property type="project" value="TreeGrafter"/>
</dbReference>
<dbReference type="GO" id="GO:0005524">
    <property type="term" value="F:ATP binding"/>
    <property type="evidence" value="ECO:0007669"/>
    <property type="project" value="UniProtKB-UniRule"/>
</dbReference>
<dbReference type="GO" id="GO:0004818">
    <property type="term" value="F:glutamate-tRNA ligase activity"/>
    <property type="evidence" value="ECO:0007669"/>
    <property type="project" value="UniProtKB-UniRule"/>
</dbReference>
<dbReference type="GO" id="GO:0000049">
    <property type="term" value="F:tRNA binding"/>
    <property type="evidence" value="ECO:0007669"/>
    <property type="project" value="InterPro"/>
</dbReference>
<dbReference type="GO" id="GO:0008270">
    <property type="term" value="F:zinc ion binding"/>
    <property type="evidence" value="ECO:0007669"/>
    <property type="project" value="InterPro"/>
</dbReference>
<dbReference type="GO" id="GO:0006424">
    <property type="term" value="P:glutamyl-tRNA aminoacylation"/>
    <property type="evidence" value="ECO:0007669"/>
    <property type="project" value="UniProtKB-UniRule"/>
</dbReference>
<dbReference type="CDD" id="cd00808">
    <property type="entry name" value="GluRS_core"/>
    <property type="match status" value="1"/>
</dbReference>
<dbReference type="FunFam" id="1.10.10.350:FF:000002">
    <property type="entry name" value="Glutamate--tRNA ligase"/>
    <property type="match status" value="1"/>
</dbReference>
<dbReference type="FunFam" id="3.40.50.620:FF:000007">
    <property type="entry name" value="Glutamate--tRNA ligase"/>
    <property type="match status" value="1"/>
</dbReference>
<dbReference type="Gene3D" id="1.10.10.350">
    <property type="match status" value="1"/>
</dbReference>
<dbReference type="Gene3D" id="3.40.50.620">
    <property type="entry name" value="HUPs"/>
    <property type="match status" value="1"/>
</dbReference>
<dbReference type="HAMAP" id="MF_00022">
    <property type="entry name" value="Glu_tRNA_synth_type1"/>
    <property type="match status" value="1"/>
</dbReference>
<dbReference type="InterPro" id="IPR045462">
    <property type="entry name" value="aa-tRNA-synth_I_cd-bd"/>
</dbReference>
<dbReference type="InterPro" id="IPR020751">
    <property type="entry name" value="aa-tRNA-synth_I_codon-bd_sub2"/>
</dbReference>
<dbReference type="InterPro" id="IPR001412">
    <property type="entry name" value="aa-tRNA-synth_I_CS"/>
</dbReference>
<dbReference type="InterPro" id="IPR008925">
    <property type="entry name" value="aa_tRNA-synth_I_cd-bd_sf"/>
</dbReference>
<dbReference type="InterPro" id="IPR004527">
    <property type="entry name" value="Glu-tRNA-ligase_bac/mito"/>
</dbReference>
<dbReference type="InterPro" id="IPR000924">
    <property type="entry name" value="Glu/Gln-tRNA-synth"/>
</dbReference>
<dbReference type="InterPro" id="IPR020058">
    <property type="entry name" value="Glu/Gln-tRNA-synth_Ib_cat-dom"/>
</dbReference>
<dbReference type="InterPro" id="IPR049940">
    <property type="entry name" value="GluQ/Sye"/>
</dbReference>
<dbReference type="InterPro" id="IPR033910">
    <property type="entry name" value="GluRS_core"/>
</dbReference>
<dbReference type="InterPro" id="IPR014729">
    <property type="entry name" value="Rossmann-like_a/b/a_fold"/>
</dbReference>
<dbReference type="NCBIfam" id="TIGR00464">
    <property type="entry name" value="gltX_bact"/>
    <property type="match status" value="1"/>
</dbReference>
<dbReference type="PANTHER" id="PTHR43311">
    <property type="entry name" value="GLUTAMATE--TRNA LIGASE"/>
    <property type="match status" value="1"/>
</dbReference>
<dbReference type="PANTHER" id="PTHR43311:SF2">
    <property type="entry name" value="GLUTAMATE--TRNA LIGASE, MITOCHONDRIAL-RELATED"/>
    <property type="match status" value="1"/>
</dbReference>
<dbReference type="Pfam" id="PF19269">
    <property type="entry name" value="Anticodon_2"/>
    <property type="match status" value="1"/>
</dbReference>
<dbReference type="Pfam" id="PF00749">
    <property type="entry name" value="tRNA-synt_1c"/>
    <property type="match status" value="1"/>
</dbReference>
<dbReference type="PRINTS" id="PR00987">
    <property type="entry name" value="TRNASYNTHGLU"/>
</dbReference>
<dbReference type="SUPFAM" id="SSF48163">
    <property type="entry name" value="An anticodon-binding domain of class I aminoacyl-tRNA synthetases"/>
    <property type="match status" value="1"/>
</dbReference>
<dbReference type="SUPFAM" id="SSF52374">
    <property type="entry name" value="Nucleotidylyl transferase"/>
    <property type="match status" value="1"/>
</dbReference>
<dbReference type="PROSITE" id="PS00178">
    <property type="entry name" value="AA_TRNA_LIGASE_I"/>
    <property type="match status" value="1"/>
</dbReference>
<accession>B1I9D7</accession>
<proteinExistence type="inferred from homology"/>
<name>SYE_STRPI</name>
<organism>
    <name type="scientific">Streptococcus pneumoniae (strain Hungary19A-6)</name>
    <dbReference type="NCBI Taxonomy" id="487214"/>
    <lineage>
        <taxon>Bacteria</taxon>
        <taxon>Bacillati</taxon>
        <taxon>Bacillota</taxon>
        <taxon>Bacilli</taxon>
        <taxon>Lactobacillales</taxon>
        <taxon>Streptococcaceae</taxon>
        <taxon>Streptococcus</taxon>
    </lineage>
</organism>
<comment type="function">
    <text evidence="1">Catalyzes the attachment of glutamate to tRNA(Glu) in a two-step reaction: glutamate is first activated by ATP to form Glu-AMP and then transferred to the acceptor end of tRNA(Glu).</text>
</comment>
<comment type="catalytic activity">
    <reaction evidence="1">
        <text>tRNA(Glu) + L-glutamate + ATP = L-glutamyl-tRNA(Glu) + AMP + diphosphate</text>
        <dbReference type="Rhea" id="RHEA:23540"/>
        <dbReference type="Rhea" id="RHEA-COMP:9663"/>
        <dbReference type="Rhea" id="RHEA-COMP:9680"/>
        <dbReference type="ChEBI" id="CHEBI:29985"/>
        <dbReference type="ChEBI" id="CHEBI:30616"/>
        <dbReference type="ChEBI" id="CHEBI:33019"/>
        <dbReference type="ChEBI" id="CHEBI:78442"/>
        <dbReference type="ChEBI" id="CHEBI:78520"/>
        <dbReference type="ChEBI" id="CHEBI:456215"/>
        <dbReference type="EC" id="6.1.1.17"/>
    </reaction>
</comment>
<comment type="subunit">
    <text evidence="1">Monomer.</text>
</comment>
<comment type="subcellular location">
    <subcellularLocation>
        <location evidence="1">Cytoplasm</location>
    </subcellularLocation>
</comment>
<comment type="similarity">
    <text evidence="1">Belongs to the class-I aminoacyl-tRNA synthetase family. Glutamate--tRNA ligase type 1 subfamily.</text>
</comment>
<evidence type="ECO:0000255" key="1">
    <source>
        <dbReference type="HAMAP-Rule" id="MF_00022"/>
    </source>
</evidence>
<feature type="chain" id="PRO_1000090113" description="Glutamate--tRNA ligase">
    <location>
        <begin position="1"/>
        <end position="486"/>
    </location>
</feature>
<feature type="short sequence motif" description="'HIGH' region" evidence="1">
    <location>
        <begin position="11"/>
        <end position="21"/>
    </location>
</feature>
<feature type="short sequence motif" description="'KMSKS' region" evidence="1">
    <location>
        <begin position="255"/>
        <end position="259"/>
    </location>
</feature>
<feature type="binding site" evidence="1">
    <location>
        <position position="258"/>
    </location>
    <ligand>
        <name>ATP</name>
        <dbReference type="ChEBI" id="CHEBI:30616"/>
    </ligand>
</feature>
<gene>
    <name evidence="1" type="primary">gltX</name>
    <name type="ordered locus">SPH_2256</name>
</gene>
<protein>
    <recommendedName>
        <fullName evidence="1">Glutamate--tRNA ligase</fullName>
        <ecNumber evidence="1">6.1.1.17</ecNumber>
    </recommendedName>
    <alternativeName>
        <fullName evidence="1">Glutamyl-tRNA synthetase</fullName>
        <shortName evidence="1">GluRS</shortName>
    </alternativeName>
</protein>
<sequence length="486" mass="55968">MSKDIRVRYAPSPTGLLHIGNARTALFNYLYARHHGGTFLIRIEDTDRKRHVEDGERSQLENLRWLGMDWDESPESHENYRQSERLDLYQKYIDQLLAEGKAYKSYVTEEELVAERERQEVAGETPRYINEYLGMSEEEKAAYIAEREAAGIIPTVRLAVNESGIYKWHDMVKGDIEFEGGNIGGDWIIQKKDGYPTYNFAVVIDDHDMQISHVIRGDDHIANTPKQLMVYEALGWEAPEFGHMTLIINSETGKKLSKRDTNTLQFIEDYRKKGYLPEAVFNFIALLGWNPGGEDEIFSREELIKLFDENRLSKSPAAFDQKKLDWMSNDYIKNADLETIFEMAKPFLEEAGRLTDKAEKLVELYKPQMKSVDEIIPLTDLFFSDFPELTEAEREVMTGETVPTVLEAFKAKLEAMTDDKFVTENIFPQIKAVQKETGIKGKNLFMPIRIAVSGEMHGPELPDTIFLLGREKSIQHIENMLKEISK</sequence>